<organism>
    <name type="scientific">Burkholderia pseudomallei (strain 1710b)</name>
    <dbReference type="NCBI Taxonomy" id="320372"/>
    <lineage>
        <taxon>Bacteria</taxon>
        <taxon>Pseudomonadati</taxon>
        <taxon>Pseudomonadota</taxon>
        <taxon>Betaproteobacteria</taxon>
        <taxon>Burkholderiales</taxon>
        <taxon>Burkholderiaceae</taxon>
        <taxon>Burkholderia</taxon>
        <taxon>pseudomallei group</taxon>
    </lineage>
</organism>
<proteinExistence type="evidence at protein level"/>
<feature type="chain" id="PRO_0000297234" description="3-methyl-2-oxobutanoate hydroxymethyltransferase">
    <location>
        <begin position="1"/>
        <end position="271"/>
    </location>
</feature>
<feature type="active site" description="Proton acceptor" evidence="1">
    <location>
        <position position="189"/>
    </location>
</feature>
<feature type="binding site" evidence="1">
    <location>
        <begin position="53"/>
        <end position="54"/>
    </location>
    <ligand>
        <name>3-methyl-2-oxobutanoate</name>
        <dbReference type="ChEBI" id="CHEBI:11851"/>
    </ligand>
</feature>
<feature type="binding site" evidence="1">
    <location>
        <position position="53"/>
    </location>
    <ligand>
        <name>Mg(2+)</name>
        <dbReference type="ChEBI" id="CHEBI:18420"/>
    </ligand>
</feature>
<feature type="binding site" evidence="1">
    <location>
        <position position="92"/>
    </location>
    <ligand>
        <name>3-methyl-2-oxobutanoate</name>
        <dbReference type="ChEBI" id="CHEBI:11851"/>
    </ligand>
</feature>
<feature type="binding site" evidence="1">
    <location>
        <position position="92"/>
    </location>
    <ligand>
        <name>Mg(2+)</name>
        <dbReference type="ChEBI" id="CHEBI:18420"/>
    </ligand>
</feature>
<feature type="binding site" evidence="1">
    <location>
        <position position="120"/>
    </location>
    <ligand>
        <name>3-methyl-2-oxobutanoate</name>
        <dbReference type="ChEBI" id="CHEBI:11851"/>
    </ligand>
</feature>
<feature type="binding site" evidence="1">
    <location>
        <position position="122"/>
    </location>
    <ligand>
        <name>Mg(2+)</name>
        <dbReference type="ChEBI" id="CHEBI:18420"/>
    </ligand>
</feature>
<feature type="helix" evidence="3">
    <location>
        <begin position="14"/>
        <end position="23"/>
    </location>
</feature>
<feature type="strand" evidence="3">
    <location>
        <begin position="27"/>
        <end position="31"/>
    </location>
</feature>
<feature type="helix" evidence="3">
    <location>
        <begin position="35"/>
        <end position="43"/>
    </location>
</feature>
<feature type="strand" evidence="3">
    <location>
        <begin position="47"/>
        <end position="51"/>
    </location>
</feature>
<feature type="helix" evidence="3">
    <location>
        <begin position="55"/>
        <end position="58"/>
    </location>
</feature>
<feature type="strand" evidence="3">
    <location>
        <begin position="63"/>
        <end position="65"/>
    </location>
</feature>
<feature type="helix" evidence="3">
    <location>
        <begin position="70"/>
        <end position="82"/>
    </location>
</feature>
<feature type="strand" evidence="3">
    <location>
        <begin position="86"/>
        <end position="92"/>
    </location>
</feature>
<feature type="helix" evidence="3">
    <location>
        <begin position="101"/>
        <end position="114"/>
    </location>
</feature>
<feature type="strand" evidence="3">
    <location>
        <begin position="117"/>
        <end position="122"/>
    </location>
</feature>
<feature type="helix" evidence="3">
    <location>
        <begin position="125"/>
        <end position="127"/>
    </location>
</feature>
<feature type="helix" evidence="3">
    <location>
        <begin position="128"/>
        <end position="136"/>
    </location>
</feature>
<feature type="strand" evidence="3">
    <location>
        <begin position="141"/>
        <end position="145"/>
    </location>
</feature>
<feature type="helix" evidence="3">
    <location>
        <begin position="168"/>
        <end position="181"/>
    </location>
</feature>
<feature type="strand" evidence="3">
    <location>
        <begin position="184"/>
        <end position="190"/>
    </location>
</feature>
<feature type="helix" evidence="3">
    <location>
        <begin position="193"/>
        <end position="202"/>
    </location>
</feature>
<feature type="strand" evidence="3">
    <location>
        <begin position="207"/>
        <end position="212"/>
    </location>
</feature>
<feature type="strand" evidence="3">
    <location>
        <begin position="216"/>
        <end position="221"/>
    </location>
</feature>
<feature type="helix" evidence="3">
    <location>
        <begin position="223"/>
        <end position="226"/>
    </location>
</feature>
<feature type="turn" evidence="3">
    <location>
        <begin position="241"/>
        <end position="244"/>
    </location>
</feature>
<feature type="helix" evidence="3">
    <location>
        <begin position="248"/>
        <end position="260"/>
    </location>
</feature>
<feature type="helix" evidence="3">
    <location>
        <begin position="267"/>
        <end position="269"/>
    </location>
</feature>
<accession>Q3JP15</accession>
<reference key="1">
    <citation type="journal article" date="2010" name="Genome Biol. Evol.">
        <title>Continuing evolution of Burkholderia mallei through genome reduction and large-scale rearrangements.</title>
        <authorList>
            <person name="Losada L."/>
            <person name="Ronning C.M."/>
            <person name="DeShazer D."/>
            <person name="Woods D."/>
            <person name="Fedorova N."/>
            <person name="Kim H.S."/>
            <person name="Shabalina S.A."/>
            <person name="Pearson T.R."/>
            <person name="Brinkac L."/>
            <person name="Tan P."/>
            <person name="Nandi T."/>
            <person name="Crabtree J."/>
            <person name="Badger J."/>
            <person name="Beckstrom-Sternberg S."/>
            <person name="Saqib M."/>
            <person name="Schutzer S.E."/>
            <person name="Keim P."/>
            <person name="Nierman W.C."/>
        </authorList>
    </citation>
    <scope>NUCLEOTIDE SEQUENCE [LARGE SCALE GENOMIC DNA]</scope>
    <source>
        <strain>1710b</strain>
    </source>
</reference>
<name>PANB_BURP1</name>
<gene>
    <name evidence="1" type="primary">panB</name>
    <name type="ordered locus">BURPS1710b_3317</name>
</gene>
<protein>
    <recommendedName>
        <fullName evidence="1">3-methyl-2-oxobutanoate hydroxymethyltransferase</fullName>
        <ecNumber evidence="1">2.1.2.11</ecNumber>
    </recommendedName>
    <alternativeName>
        <fullName evidence="1">Ketopantoate hydroxymethyltransferase</fullName>
        <shortName evidence="1">KPHMT</shortName>
    </alternativeName>
</protein>
<sequence>MTYLQESSRPAVTVPKLQAMREAGEKIAMLTSYDASFAALLDRANVDVQLIGDSLGNVLQGQATTLPVTLDDIAYHTACVARAQPRGLVVADLPFGTYGTPADAFASAVKLMRAGAQMVKLEGGEWLAETVRFLVERAVPVCAHVGLTPQSVHAFGGFKVQGKTEAGAAQLLRDARAVEEAGAQLIVLEAVPTLVAAEVTRELSIPTIGIGAGAECSGQVLVLHDMLGVFPGKRPRFVKDFMQGQPSIFAAVEAYVRAVKDGSFPGPEHSF</sequence>
<comment type="function">
    <text evidence="1">Catalyzes the reversible reaction in which hydroxymethyl group from 5,10-methylenetetrahydrofolate is transferred onto alpha-ketoisovalerate to form ketopantoate.</text>
</comment>
<comment type="catalytic activity">
    <reaction evidence="1">
        <text>3-methyl-2-oxobutanoate + (6R)-5,10-methylene-5,6,7,8-tetrahydrofolate + H2O = 2-dehydropantoate + (6S)-5,6,7,8-tetrahydrofolate</text>
        <dbReference type="Rhea" id="RHEA:11824"/>
        <dbReference type="ChEBI" id="CHEBI:11561"/>
        <dbReference type="ChEBI" id="CHEBI:11851"/>
        <dbReference type="ChEBI" id="CHEBI:15377"/>
        <dbReference type="ChEBI" id="CHEBI:15636"/>
        <dbReference type="ChEBI" id="CHEBI:57453"/>
        <dbReference type="EC" id="2.1.2.11"/>
    </reaction>
</comment>
<comment type="cofactor">
    <cofactor evidence="1">
        <name>Mg(2+)</name>
        <dbReference type="ChEBI" id="CHEBI:18420"/>
    </cofactor>
    <text evidence="1">Binds 1 Mg(2+) ion per subunit.</text>
</comment>
<comment type="pathway">
    <text evidence="1">Cofactor biosynthesis; (R)-pantothenate biosynthesis; (R)-pantoate from 3-methyl-2-oxobutanoate: step 1/2.</text>
</comment>
<comment type="subunit">
    <text evidence="1">Homodecamer; pentamer of dimers.</text>
</comment>
<comment type="subcellular location">
    <subcellularLocation>
        <location evidence="1">Cytoplasm</location>
    </subcellularLocation>
</comment>
<comment type="similarity">
    <text evidence="1">Belongs to the PanB family.</text>
</comment>
<comment type="sequence caution" evidence="2">
    <conflict type="erroneous initiation">
        <sequence resource="EMBL-CDS" id="ABA47649"/>
    </conflict>
</comment>
<dbReference type="EC" id="2.1.2.11" evidence="1"/>
<dbReference type="EMBL" id="CP000124">
    <property type="protein sequence ID" value="ABA47649.1"/>
    <property type="status" value="ALT_INIT"/>
    <property type="molecule type" value="Genomic_DNA"/>
</dbReference>
<dbReference type="RefSeq" id="WP_004194137.1">
    <property type="nucleotide sequence ID" value="NC_007434.1"/>
</dbReference>
<dbReference type="PDB" id="3EZ4">
    <property type="method" value="X-ray"/>
    <property type="resolution" value="2.10 A"/>
    <property type="chains" value="A/B/C/D/E/F/G/H/I/J=12-271"/>
</dbReference>
<dbReference type="PDBsum" id="3EZ4"/>
<dbReference type="SMR" id="Q3JP15"/>
<dbReference type="EnsemblBacteria" id="ABA47649">
    <property type="protein sequence ID" value="ABA47649"/>
    <property type="gene ID" value="BURPS1710b_3317"/>
</dbReference>
<dbReference type="GeneID" id="93061412"/>
<dbReference type="KEGG" id="bpm:BURPS1710b_3317"/>
<dbReference type="HOGENOM" id="CLU_036645_1_0_4"/>
<dbReference type="UniPathway" id="UPA00028">
    <property type="reaction ID" value="UER00003"/>
</dbReference>
<dbReference type="EvolutionaryTrace" id="Q3JP15"/>
<dbReference type="Proteomes" id="UP000002700">
    <property type="component" value="Chromosome I"/>
</dbReference>
<dbReference type="GO" id="GO:0005737">
    <property type="term" value="C:cytoplasm"/>
    <property type="evidence" value="ECO:0007669"/>
    <property type="project" value="UniProtKB-SubCell"/>
</dbReference>
<dbReference type="GO" id="GO:0003864">
    <property type="term" value="F:3-methyl-2-oxobutanoate hydroxymethyltransferase activity"/>
    <property type="evidence" value="ECO:0007669"/>
    <property type="project" value="UniProtKB-UniRule"/>
</dbReference>
<dbReference type="GO" id="GO:0000287">
    <property type="term" value="F:magnesium ion binding"/>
    <property type="evidence" value="ECO:0007669"/>
    <property type="project" value="TreeGrafter"/>
</dbReference>
<dbReference type="GO" id="GO:0015940">
    <property type="term" value="P:pantothenate biosynthetic process"/>
    <property type="evidence" value="ECO:0007669"/>
    <property type="project" value="UniProtKB-UniRule"/>
</dbReference>
<dbReference type="CDD" id="cd06557">
    <property type="entry name" value="KPHMT-like"/>
    <property type="match status" value="1"/>
</dbReference>
<dbReference type="FunFam" id="3.20.20.60:FF:000003">
    <property type="entry name" value="3-methyl-2-oxobutanoate hydroxymethyltransferase"/>
    <property type="match status" value="1"/>
</dbReference>
<dbReference type="Gene3D" id="3.20.20.60">
    <property type="entry name" value="Phosphoenolpyruvate-binding domains"/>
    <property type="match status" value="1"/>
</dbReference>
<dbReference type="HAMAP" id="MF_00156">
    <property type="entry name" value="PanB"/>
    <property type="match status" value="1"/>
</dbReference>
<dbReference type="InterPro" id="IPR003700">
    <property type="entry name" value="Pantoate_hydroxy_MeTrfase"/>
</dbReference>
<dbReference type="InterPro" id="IPR015813">
    <property type="entry name" value="Pyrv/PenolPyrv_kinase-like_dom"/>
</dbReference>
<dbReference type="InterPro" id="IPR040442">
    <property type="entry name" value="Pyrv_kinase-like_dom_sf"/>
</dbReference>
<dbReference type="NCBIfam" id="TIGR00222">
    <property type="entry name" value="panB"/>
    <property type="match status" value="1"/>
</dbReference>
<dbReference type="NCBIfam" id="NF001452">
    <property type="entry name" value="PRK00311.1"/>
    <property type="match status" value="1"/>
</dbReference>
<dbReference type="PANTHER" id="PTHR20881">
    <property type="entry name" value="3-METHYL-2-OXOBUTANOATE HYDROXYMETHYLTRANSFERASE"/>
    <property type="match status" value="1"/>
</dbReference>
<dbReference type="PANTHER" id="PTHR20881:SF0">
    <property type="entry name" value="3-METHYL-2-OXOBUTANOATE HYDROXYMETHYLTRANSFERASE"/>
    <property type="match status" value="1"/>
</dbReference>
<dbReference type="Pfam" id="PF02548">
    <property type="entry name" value="Pantoate_transf"/>
    <property type="match status" value="1"/>
</dbReference>
<dbReference type="PIRSF" id="PIRSF000388">
    <property type="entry name" value="Pantoate_hydroxy_MeTrfase"/>
    <property type="match status" value="1"/>
</dbReference>
<dbReference type="SUPFAM" id="SSF51621">
    <property type="entry name" value="Phosphoenolpyruvate/pyruvate domain"/>
    <property type="match status" value="1"/>
</dbReference>
<evidence type="ECO:0000255" key="1">
    <source>
        <dbReference type="HAMAP-Rule" id="MF_00156"/>
    </source>
</evidence>
<evidence type="ECO:0000305" key="2"/>
<evidence type="ECO:0007829" key="3">
    <source>
        <dbReference type="PDB" id="3EZ4"/>
    </source>
</evidence>
<keyword id="KW-0002">3D-structure</keyword>
<keyword id="KW-0963">Cytoplasm</keyword>
<keyword id="KW-0460">Magnesium</keyword>
<keyword id="KW-0479">Metal-binding</keyword>
<keyword id="KW-0566">Pantothenate biosynthesis</keyword>
<keyword id="KW-0808">Transferase</keyword>